<proteinExistence type="inferred from homology"/>
<evidence type="ECO:0000255" key="1">
    <source>
        <dbReference type="HAMAP-Rule" id="MF_00605"/>
    </source>
</evidence>
<feature type="chain" id="PRO_1000006483" description="tRNA (guanine-N(1)-)-methyltransferase">
    <location>
        <begin position="1"/>
        <end position="245"/>
    </location>
</feature>
<feature type="binding site" evidence="1">
    <location>
        <position position="113"/>
    </location>
    <ligand>
        <name>S-adenosyl-L-methionine</name>
        <dbReference type="ChEBI" id="CHEBI:59789"/>
    </ligand>
</feature>
<feature type="binding site" evidence="1">
    <location>
        <begin position="133"/>
        <end position="138"/>
    </location>
    <ligand>
        <name>S-adenosyl-L-methionine</name>
        <dbReference type="ChEBI" id="CHEBI:59789"/>
    </ligand>
</feature>
<organism>
    <name type="scientific">Histophilus somni (strain 129Pt)</name>
    <name type="common">Haemophilus somnus</name>
    <dbReference type="NCBI Taxonomy" id="205914"/>
    <lineage>
        <taxon>Bacteria</taxon>
        <taxon>Pseudomonadati</taxon>
        <taxon>Pseudomonadota</taxon>
        <taxon>Gammaproteobacteria</taxon>
        <taxon>Pasteurellales</taxon>
        <taxon>Pasteurellaceae</taxon>
        <taxon>Histophilus</taxon>
    </lineage>
</organism>
<accession>Q0I1J8</accession>
<keyword id="KW-0963">Cytoplasm</keyword>
<keyword id="KW-0489">Methyltransferase</keyword>
<keyword id="KW-0949">S-adenosyl-L-methionine</keyword>
<keyword id="KW-0808">Transferase</keyword>
<keyword id="KW-0819">tRNA processing</keyword>
<sequence length="245" mass="27808">MWIGIISLFPEMFKAITEYGVTGRAVRQNLLEIQYWNPRDFTFDKHKTVDDRPYGGGPGMLMMVQPLRDAIHCAKSVAGDGVKVIYLSPQGRKLDQNGVQELARNQKMIFVCGRYEGIDERLIETEIDEEWSIGDYVLTGGELPAMTLIDAVARFVPCVLGKQASAQEDSFAEGLLDCPHYTRPEQLNGLTVPPVLMSGNHEEIRKWRLKQSLQRTWLRRPELLESLALTDEQSKLLSQIKQENS</sequence>
<protein>
    <recommendedName>
        <fullName evidence="1">tRNA (guanine-N(1)-)-methyltransferase</fullName>
        <ecNumber evidence="1">2.1.1.228</ecNumber>
    </recommendedName>
    <alternativeName>
        <fullName evidence="1">M1G-methyltransferase</fullName>
    </alternativeName>
    <alternativeName>
        <fullName evidence="1">tRNA [GM37] methyltransferase</fullName>
    </alternativeName>
</protein>
<gene>
    <name evidence="1" type="primary">trmD</name>
    <name type="ordered locus">HS_0295</name>
</gene>
<dbReference type="EC" id="2.1.1.228" evidence="1"/>
<dbReference type="EMBL" id="CP000436">
    <property type="protein sequence ID" value="ABI24573.1"/>
    <property type="molecule type" value="Genomic_DNA"/>
</dbReference>
<dbReference type="SMR" id="Q0I1J8"/>
<dbReference type="KEGG" id="hso:HS_0295"/>
<dbReference type="eggNOG" id="COG0336">
    <property type="taxonomic scope" value="Bacteria"/>
</dbReference>
<dbReference type="HOGENOM" id="CLU_047363_0_1_6"/>
<dbReference type="GO" id="GO:0005829">
    <property type="term" value="C:cytosol"/>
    <property type="evidence" value="ECO:0007669"/>
    <property type="project" value="TreeGrafter"/>
</dbReference>
<dbReference type="GO" id="GO:0052906">
    <property type="term" value="F:tRNA (guanine(37)-N1)-methyltransferase activity"/>
    <property type="evidence" value="ECO:0007669"/>
    <property type="project" value="UniProtKB-UniRule"/>
</dbReference>
<dbReference type="GO" id="GO:0002939">
    <property type="term" value="P:tRNA N1-guanine methylation"/>
    <property type="evidence" value="ECO:0007669"/>
    <property type="project" value="TreeGrafter"/>
</dbReference>
<dbReference type="CDD" id="cd18080">
    <property type="entry name" value="TrmD-like"/>
    <property type="match status" value="1"/>
</dbReference>
<dbReference type="FunFam" id="1.10.1270.20:FF:000001">
    <property type="entry name" value="tRNA (guanine-N(1)-)-methyltransferase"/>
    <property type="match status" value="1"/>
</dbReference>
<dbReference type="FunFam" id="3.40.1280.10:FF:000001">
    <property type="entry name" value="tRNA (guanine-N(1)-)-methyltransferase"/>
    <property type="match status" value="1"/>
</dbReference>
<dbReference type="Gene3D" id="3.40.1280.10">
    <property type="match status" value="1"/>
</dbReference>
<dbReference type="Gene3D" id="1.10.1270.20">
    <property type="entry name" value="tRNA(m1g37)methyltransferase, domain 2"/>
    <property type="match status" value="1"/>
</dbReference>
<dbReference type="HAMAP" id="MF_00605">
    <property type="entry name" value="TrmD"/>
    <property type="match status" value="1"/>
</dbReference>
<dbReference type="InterPro" id="IPR029028">
    <property type="entry name" value="Alpha/beta_knot_MTases"/>
</dbReference>
<dbReference type="InterPro" id="IPR023148">
    <property type="entry name" value="tRNA_m1G_MeTrfase_C_sf"/>
</dbReference>
<dbReference type="InterPro" id="IPR002649">
    <property type="entry name" value="tRNA_m1G_MeTrfase_TrmD"/>
</dbReference>
<dbReference type="InterPro" id="IPR029026">
    <property type="entry name" value="tRNA_m1G_MTases_N"/>
</dbReference>
<dbReference type="InterPro" id="IPR016009">
    <property type="entry name" value="tRNA_MeTrfase_TRMD/TRM10"/>
</dbReference>
<dbReference type="NCBIfam" id="NF000648">
    <property type="entry name" value="PRK00026.1"/>
    <property type="match status" value="1"/>
</dbReference>
<dbReference type="NCBIfam" id="TIGR00088">
    <property type="entry name" value="trmD"/>
    <property type="match status" value="1"/>
</dbReference>
<dbReference type="PANTHER" id="PTHR46417">
    <property type="entry name" value="TRNA (GUANINE-N(1)-)-METHYLTRANSFERASE"/>
    <property type="match status" value="1"/>
</dbReference>
<dbReference type="PANTHER" id="PTHR46417:SF1">
    <property type="entry name" value="TRNA (GUANINE-N(1)-)-METHYLTRANSFERASE"/>
    <property type="match status" value="1"/>
</dbReference>
<dbReference type="Pfam" id="PF01746">
    <property type="entry name" value="tRNA_m1G_MT"/>
    <property type="match status" value="1"/>
</dbReference>
<dbReference type="PIRSF" id="PIRSF000386">
    <property type="entry name" value="tRNA_mtase"/>
    <property type="match status" value="1"/>
</dbReference>
<dbReference type="SUPFAM" id="SSF75217">
    <property type="entry name" value="alpha/beta knot"/>
    <property type="match status" value="1"/>
</dbReference>
<comment type="function">
    <text evidence="1">Specifically methylates guanosine-37 in various tRNAs.</text>
</comment>
<comment type="catalytic activity">
    <reaction evidence="1">
        <text>guanosine(37) in tRNA + S-adenosyl-L-methionine = N(1)-methylguanosine(37) in tRNA + S-adenosyl-L-homocysteine + H(+)</text>
        <dbReference type="Rhea" id="RHEA:36899"/>
        <dbReference type="Rhea" id="RHEA-COMP:10145"/>
        <dbReference type="Rhea" id="RHEA-COMP:10147"/>
        <dbReference type="ChEBI" id="CHEBI:15378"/>
        <dbReference type="ChEBI" id="CHEBI:57856"/>
        <dbReference type="ChEBI" id="CHEBI:59789"/>
        <dbReference type="ChEBI" id="CHEBI:73542"/>
        <dbReference type="ChEBI" id="CHEBI:74269"/>
        <dbReference type="EC" id="2.1.1.228"/>
    </reaction>
</comment>
<comment type="subunit">
    <text evidence="1">Homodimer.</text>
</comment>
<comment type="subcellular location">
    <subcellularLocation>
        <location evidence="1">Cytoplasm</location>
    </subcellularLocation>
</comment>
<comment type="similarity">
    <text evidence="1">Belongs to the RNA methyltransferase TrmD family.</text>
</comment>
<reference key="1">
    <citation type="journal article" date="2007" name="J. Bacteriol.">
        <title>Complete genome sequence of Haemophilus somnus (Histophilus somni) strain 129Pt and comparison to Haemophilus ducreyi 35000HP and Haemophilus influenzae Rd.</title>
        <authorList>
            <person name="Challacombe J.F."/>
            <person name="Duncan A.J."/>
            <person name="Brettin T.S."/>
            <person name="Bruce D."/>
            <person name="Chertkov O."/>
            <person name="Detter J.C."/>
            <person name="Han C.S."/>
            <person name="Misra M."/>
            <person name="Richardson P."/>
            <person name="Tapia R."/>
            <person name="Thayer N."/>
            <person name="Xie G."/>
            <person name="Inzana T.J."/>
        </authorList>
    </citation>
    <scope>NUCLEOTIDE SEQUENCE [LARGE SCALE GENOMIC DNA]</scope>
    <source>
        <strain>129Pt</strain>
    </source>
</reference>
<name>TRMD_HISS1</name>